<protein>
    <recommendedName>
        <fullName evidence="1">Large ribosomal subunit protein uL4</fullName>
    </recommendedName>
    <alternativeName>
        <fullName evidence="3">50S ribosomal protein L4</fullName>
    </alternativeName>
</protein>
<dbReference type="EMBL" id="BA000031">
    <property type="protein sequence ID" value="BAC58521.1"/>
    <property type="molecule type" value="Genomic_DNA"/>
</dbReference>
<dbReference type="RefSeq" id="NP_796637.1">
    <property type="nucleotide sequence ID" value="NC_004603.1"/>
</dbReference>
<dbReference type="RefSeq" id="WP_005379556.1">
    <property type="nucleotide sequence ID" value="NC_004603.1"/>
</dbReference>
<dbReference type="SMR" id="Q87T12"/>
<dbReference type="GeneID" id="75168985"/>
<dbReference type="KEGG" id="vpa:VP0258"/>
<dbReference type="PATRIC" id="fig|223926.6.peg.249"/>
<dbReference type="eggNOG" id="COG0088">
    <property type="taxonomic scope" value="Bacteria"/>
</dbReference>
<dbReference type="HOGENOM" id="CLU_041575_5_2_6"/>
<dbReference type="Proteomes" id="UP000002493">
    <property type="component" value="Chromosome 1"/>
</dbReference>
<dbReference type="GO" id="GO:1990904">
    <property type="term" value="C:ribonucleoprotein complex"/>
    <property type="evidence" value="ECO:0007669"/>
    <property type="project" value="UniProtKB-KW"/>
</dbReference>
<dbReference type="GO" id="GO:0005840">
    <property type="term" value="C:ribosome"/>
    <property type="evidence" value="ECO:0007669"/>
    <property type="project" value="UniProtKB-KW"/>
</dbReference>
<dbReference type="GO" id="GO:0019843">
    <property type="term" value="F:rRNA binding"/>
    <property type="evidence" value="ECO:0007669"/>
    <property type="project" value="UniProtKB-UniRule"/>
</dbReference>
<dbReference type="GO" id="GO:0003735">
    <property type="term" value="F:structural constituent of ribosome"/>
    <property type="evidence" value="ECO:0007669"/>
    <property type="project" value="InterPro"/>
</dbReference>
<dbReference type="GO" id="GO:0006412">
    <property type="term" value="P:translation"/>
    <property type="evidence" value="ECO:0007669"/>
    <property type="project" value="UniProtKB-UniRule"/>
</dbReference>
<dbReference type="FunFam" id="3.40.1370.10:FF:000001">
    <property type="entry name" value="50S ribosomal protein L4"/>
    <property type="match status" value="1"/>
</dbReference>
<dbReference type="Gene3D" id="3.40.1370.10">
    <property type="match status" value="1"/>
</dbReference>
<dbReference type="HAMAP" id="MF_01328_B">
    <property type="entry name" value="Ribosomal_uL4_B"/>
    <property type="match status" value="1"/>
</dbReference>
<dbReference type="InterPro" id="IPR002136">
    <property type="entry name" value="Ribosomal_uL4"/>
</dbReference>
<dbReference type="InterPro" id="IPR013005">
    <property type="entry name" value="Ribosomal_uL4-like"/>
</dbReference>
<dbReference type="InterPro" id="IPR023574">
    <property type="entry name" value="Ribosomal_uL4_dom_sf"/>
</dbReference>
<dbReference type="NCBIfam" id="TIGR03953">
    <property type="entry name" value="rplD_bact"/>
    <property type="match status" value="1"/>
</dbReference>
<dbReference type="PANTHER" id="PTHR10746">
    <property type="entry name" value="50S RIBOSOMAL PROTEIN L4"/>
    <property type="match status" value="1"/>
</dbReference>
<dbReference type="PANTHER" id="PTHR10746:SF6">
    <property type="entry name" value="LARGE RIBOSOMAL SUBUNIT PROTEIN UL4M"/>
    <property type="match status" value="1"/>
</dbReference>
<dbReference type="Pfam" id="PF00573">
    <property type="entry name" value="Ribosomal_L4"/>
    <property type="match status" value="1"/>
</dbReference>
<dbReference type="SUPFAM" id="SSF52166">
    <property type="entry name" value="Ribosomal protein L4"/>
    <property type="match status" value="1"/>
</dbReference>
<gene>
    <name evidence="1" type="primary">rplD</name>
    <name type="ordered locus">VP0258</name>
</gene>
<comment type="function">
    <text evidence="1">One of the primary rRNA binding proteins, this protein initially binds near the 5'-end of the 23S rRNA. It is important during the early stages of 50S assembly. It makes multiple contacts with different domains of the 23S rRNA in the assembled 50S subunit and ribosome.</text>
</comment>
<comment type="function">
    <text evidence="1">Forms part of the polypeptide exit tunnel.</text>
</comment>
<comment type="subunit">
    <text evidence="1">Part of the 50S ribosomal subunit.</text>
</comment>
<comment type="similarity">
    <text evidence="1">Belongs to the universal ribosomal protein uL4 family.</text>
</comment>
<accession>Q87T12</accession>
<organism>
    <name type="scientific">Vibrio parahaemolyticus serotype O3:K6 (strain RIMD 2210633)</name>
    <dbReference type="NCBI Taxonomy" id="223926"/>
    <lineage>
        <taxon>Bacteria</taxon>
        <taxon>Pseudomonadati</taxon>
        <taxon>Pseudomonadota</taxon>
        <taxon>Gammaproteobacteria</taxon>
        <taxon>Vibrionales</taxon>
        <taxon>Vibrionaceae</taxon>
        <taxon>Vibrio</taxon>
    </lineage>
</organism>
<name>RL4_VIBPA</name>
<proteinExistence type="inferred from homology"/>
<reference key="1">
    <citation type="journal article" date="2003" name="Lancet">
        <title>Genome sequence of Vibrio parahaemolyticus: a pathogenic mechanism distinct from that of V. cholerae.</title>
        <authorList>
            <person name="Makino K."/>
            <person name="Oshima K."/>
            <person name="Kurokawa K."/>
            <person name="Yokoyama K."/>
            <person name="Uda T."/>
            <person name="Tagomori K."/>
            <person name="Iijima Y."/>
            <person name="Najima M."/>
            <person name="Nakano M."/>
            <person name="Yamashita A."/>
            <person name="Kubota Y."/>
            <person name="Kimura S."/>
            <person name="Yasunaga T."/>
            <person name="Honda T."/>
            <person name="Shinagawa H."/>
            <person name="Hattori M."/>
            <person name="Iida T."/>
        </authorList>
    </citation>
    <scope>NUCLEOTIDE SEQUENCE [LARGE SCALE GENOMIC DNA]</scope>
    <source>
        <strain>RIMD 2210633</strain>
    </source>
</reference>
<sequence length="200" mass="21888">MELMVKGADALTVSETTFGREFNEALVHQVVVAYAAGARQGTRAQKTRSEVSGGGAKPWRQKGTGRARAGTIRSPIWRTGGVTFAAKPQDHSQKVNKKMYRGAMKSILSELVRQERLIVVDNFSVEAPKTKELVAKLKELELTDALIVTSEVDENLFLAARNLYKVDARDVAGIDPVSLIAFDKVVMTAEAVKQVEEMLA</sequence>
<evidence type="ECO:0000255" key="1">
    <source>
        <dbReference type="HAMAP-Rule" id="MF_01328"/>
    </source>
</evidence>
<evidence type="ECO:0000256" key="2">
    <source>
        <dbReference type="SAM" id="MobiDB-lite"/>
    </source>
</evidence>
<evidence type="ECO:0000305" key="3"/>
<keyword id="KW-0687">Ribonucleoprotein</keyword>
<keyword id="KW-0689">Ribosomal protein</keyword>
<keyword id="KW-0694">RNA-binding</keyword>
<keyword id="KW-0699">rRNA-binding</keyword>
<feature type="chain" id="PRO_0000129309" description="Large ribosomal subunit protein uL4">
    <location>
        <begin position="1"/>
        <end position="200"/>
    </location>
</feature>
<feature type="region of interest" description="Disordered" evidence="2">
    <location>
        <begin position="42"/>
        <end position="65"/>
    </location>
</feature>